<name>Y1608_MARN8</name>
<accession>A1U123</accession>
<evidence type="ECO:0000255" key="1">
    <source>
        <dbReference type="HAMAP-Rule" id="MF_00676"/>
    </source>
</evidence>
<organism>
    <name type="scientific">Marinobacter nauticus (strain ATCC 700491 / DSM 11845 / VT8)</name>
    <name type="common">Marinobacter aquaeolei</name>
    <dbReference type="NCBI Taxonomy" id="351348"/>
    <lineage>
        <taxon>Bacteria</taxon>
        <taxon>Pseudomonadati</taxon>
        <taxon>Pseudomonadota</taxon>
        <taxon>Gammaproteobacteria</taxon>
        <taxon>Pseudomonadales</taxon>
        <taxon>Marinobacteraceae</taxon>
        <taxon>Marinobacter</taxon>
    </lineage>
</organism>
<protein>
    <recommendedName>
        <fullName evidence="1">UPF0260 protein Maqu_1608</fullName>
    </recommendedName>
</protein>
<proteinExistence type="inferred from homology"/>
<dbReference type="EMBL" id="CP000514">
    <property type="protein sequence ID" value="ABM18692.1"/>
    <property type="molecule type" value="Genomic_DNA"/>
</dbReference>
<dbReference type="RefSeq" id="WP_011785093.1">
    <property type="nucleotide sequence ID" value="NC_008740.1"/>
</dbReference>
<dbReference type="STRING" id="351348.Maqu_1608"/>
<dbReference type="DNASU" id="4656392"/>
<dbReference type="KEGG" id="maq:Maqu_1608"/>
<dbReference type="eggNOG" id="COG2983">
    <property type="taxonomic scope" value="Bacteria"/>
</dbReference>
<dbReference type="HOGENOM" id="CLU_109769_1_0_6"/>
<dbReference type="OrthoDB" id="9786855at2"/>
<dbReference type="Proteomes" id="UP000000998">
    <property type="component" value="Chromosome"/>
</dbReference>
<dbReference type="HAMAP" id="MF_00676">
    <property type="entry name" value="UPF0260"/>
    <property type="match status" value="1"/>
</dbReference>
<dbReference type="InterPro" id="IPR005358">
    <property type="entry name" value="Puta_zinc/iron-chelating_dom"/>
</dbReference>
<dbReference type="InterPro" id="IPR008228">
    <property type="entry name" value="UCP006173"/>
</dbReference>
<dbReference type="NCBIfam" id="NF003501">
    <property type="entry name" value="PRK05170.1-5"/>
    <property type="match status" value="1"/>
</dbReference>
<dbReference type="NCBIfam" id="NF003507">
    <property type="entry name" value="PRK05170.2-5"/>
    <property type="match status" value="1"/>
</dbReference>
<dbReference type="PANTHER" id="PTHR37421">
    <property type="entry name" value="UPF0260 PROTEIN YCGN"/>
    <property type="match status" value="1"/>
</dbReference>
<dbReference type="PANTHER" id="PTHR37421:SF1">
    <property type="entry name" value="UPF0260 PROTEIN YCGN"/>
    <property type="match status" value="1"/>
</dbReference>
<dbReference type="Pfam" id="PF03692">
    <property type="entry name" value="CxxCxxCC"/>
    <property type="match status" value="1"/>
</dbReference>
<dbReference type="PIRSF" id="PIRSF006173">
    <property type="entry name" value="UCP006173"/>
    <property type="match status" value="1"/>
</dbReference>
<gene>
    <name type="ordered locus">Maqu_1608</name>
</gene>
<sequence>MIAQIPFWQRKRLADMTQPEWESLCDGCGKCCLQKLEDEDTGEVYHTDLVCRYMDLDTCGCTVYEQRLKKVPGCTVLTADTVLSYHWLPYTCAYRTLAEGRPLPDWHPLRSGDPDTVHQARVSVRGNVVSEDSVPEEDWEEHIIHWIL</sequence>
<feature type="chain" id="PRO_1000082970" description="UPF0260 protein Maqu_1608">
    <location>
        <begin position="1"/>
        <end position="148"/>
    </location>
</feature>
<comment type="similarity">
    <text evidence="1">Belongs to the UPF0260 family.</text>
</comment>
<reference key="1">
    <citation type="journal article" date="2011" name="Appl. Environ. Microbiol.">
        <title>Genomic potential of Marinobacter aquaeolei, a biogeochemical 'opportunitroph'.</title>
        <authorList>
            <person name="Singer E."/>
            <person name="Webb E.A."/>
            <person name="Nelson W.C."/>
            <person name="Heidelberg J.F."/>
            <person name="Ivanova N."/>
            <person name="Pati A."/>
            <person name="Edwards K.J."/>
        </authorList>
    </citation>
    <scope>NUCLEOTIDE SEQUENCE [LARGE SCALE GENOMIC DNA]</scope>
    <source>
        <strain>ATCC 700491 / DSM 11845 / VT8</strain>
    </source>
</reference>